<reference key="1">
    <citation type="journal article" date="1991" name="J. Biol. Chem.">
        <title>Cloning, sequencing, and overexpression of genes for ribosomal proteins from Bacillus stearothermophilus.</title>
        <authorList>
            <person name="Ramakrishnan V."/>
            <person name="Gerchman S.E."/>
        </authorList>
    </citation>
    <scope>NUCLEOTIDE SEQUENCE [GENOMIC DNA]</scope>
</reference>
<reference key="2">
    <citation type="journal article" date="1981" name="FEBS Lett.">
        <title>The amino acid sequence of protein BL10 from the 50S subunit of the Bacillus stearothermophilus ribosome.</title>
        <authorList>
            <person name="Kimura M."/>
            <person name="Rawlings N."/>
            <person name="Appelt K."/>
        </authorList>
    </citation>
    <scope>PROTEIN SEQUENCE OF 2-178</scope>
</reference>
<reference key="3">
    <citation type="journal article" date="1995" name="EMBO J.">
        <title>Protein-rRNA binding features and their structural and functional implications in ribosomes as determined by cross-linking studies.</title>
        <authorList>
            <person name="Urlaub H."/>
            <person name="Kruft V."/>
            <person name="Bischof O."/>
            <person name="Mueller E.-C."/>
            <person name="Wittmann-Liebold B."/>
        </authorList>
    </citation>
    <scope>PROTEIN SEQUENCE OF 150-164</scope>
    <scope>CROSS-LINKING TO RRNA</scope>
    <source>
        <strain>799</strain>
    </source>
</reference>
<reference key="4">
    <citation type="journal article" date="1993" name="EMBO J.">
        <title>Ribosomal protein L6: structural evidence of gene duplication from a primitive RNA binding protein.</title>
        <authorList>
            <person name="Golden B.L."/>
            <person name="Ramakrishnan V."/>
            <person name="White S.W."/>
        </authorList>
    </citation>
    <scope>X-RAY CRYSTALLOGRAPHY (2.6 ANGSTROMS)</scope>
</reference>
<reference key="5">
    <citation type="journal article" date="1998" name="J. Mol. Biol.">
        <title>Ribosomal proteins S5 and L6: high-resolution crystal structures and roles in protein synthesis and antibiotic resistance.</title>
        <authorList>
            <person name="Davies C."/>
            <person name="Bussiere D.E."/>
            <person name="Golden B.L."/>
            <person name="Porter S.J."/>
            <person name="Ramakrishnan V."/>
            <person name="White S.W."/>
        </authorList>
    </citation>
    <scope>X-RAY CRYSTALLOGRAPHY (2.0 ANGSTROMS)</scope>
</reference>
<reference key="6">
    <citation type="journal article" date="1999" name="Nature">
        <title>Placement of protein and RNA structures into a 5 A-resolution map of the 50S ribosomal subunit.</title>
        <authorList>
            <person name="Ban N."/>
            <person name="Nissen P."/>
            <person name="Hansen J."/>
            <person name="Capel M."/>
            <person name="Moore P.B."/>
            <person name="Steitz T.A."/>
        </authorList>
    </citation>
    <scope>3D-STRUCTURE MODELING ONTO THE H.MARISMORTUI 50S RIBOSOME</scope>
</reference>
<organism>
    <name type="scientific">Geobacillus stearothermophilus</name>
    <name type="common">Bacillus stearothermophilus</name>
    <dbReference type="NCBI Taxonomy" id="1422"/>
    <lineage>
        <taxon>Bacteria</taxon>
        <taxon>Bacillati</taxon>
        <taxon>Bacillota</taxon>
        <taxon>Bacilli</taxon>
        <taxon>Bacillales</taxon>
        <taxon>Anoxybacillaceae</taxon>
        <taxon>Geobacillus</taxon>
    </lineage>
</organism>
<keyword id="KW-0002">3D-structure</keyword>
<keyword id="KW-0903">Direct protein sequencing</keyword>
<keyword id="KW-0687">Ribonucleoprotein</keyword>
<keyword id="KW-0689">Ribosomal protein</keyword>
<keyword id="KW-0694">RNA-binding</keyword>
<keyword id="KW-0699">rRNA-binding</keyword>
<protein>
    <recommendedName>
        <fullName evidence="2">Large ribosomal subunit protein uL6</fullName>
    </recommendedName>
    <alternativeName>
        <fullName evidence="4">50S ribosomal protein L6</fullName>
    </alternativeName>
    <alternativeName>
        <fullName>BL10</fullName>
    </alternativeName>
</protein>
<evidence type="ECO:0000250" key="1"/>
<evidence type="ECO:0000255" key="2">
    <source>
        <dbReference type="HAMAP-Rule" id="MF_01365"/>
    </source>
</evidence>
<evidence type="ECO:0000269" key="3">
    <source ref="2"/>
</evidence>
<evidence type="ECO:0000305" key="4"/>
<evidence type="ECO:0007829" key="5">
    <source>
        <dbReference type="PDB" id="1RL6"/>
    </source>
</evidence>
<sequence length="178" mass="19299">MSRVGKKPIEIPAGVTVTVNGNTVTVKGPKGELTRTFHPDMTITVEGNVITVTRPSDEKHHRALHGTTRSLLANMVEGVSKGYEKALELVGVGYRASKQGKKLVLSVGYSHPVEIEPEEGLEIEVPSQTKIIVKGADKQRVGELAANIRAVRPPEPYKGKGIRYEGELVRLKEGKTGK</sequence>
<gene>
    <name evidence="2" type="primary">rplF</name>
</gene>
<dbReference type="EMBL" id="M57622">
    <property type="protein sequence ID" value="AAA22700.1"/>
    <property type="status" value="ALT_SEQ"/>
    <property type="molecule type" value="Genomic_DNA"/>
</dbReference>
<dbReference type="PIR" id="A02766">
    <property type="entry name" value="R5BS0F"/>
</dbReference>
<dbReference type="RefSeq" id="WP_011229634.1">
    <property type="nucleotide sequence ID" value="NZ_RCTK01000011.1"/>
</dbReference>
<dbReference type="PDB" id="1ML5">
    <property type="method" value="EM"/>
    <property type="resolution" value="14.00 A"/>
    <property type="chains" value="h=2-178"/>
</dbReference>
<dbReference type="PDB" id="1RL6">
    <property type="method" value="X-ray"/>
    <property type="resolution" value="2.00 A"/>
    <property type="chains" value="A=2-178"/>
</dbReference>
<dbReference type="PDB" id="4V4T">
    <property type="method" value="X-ray"/>
    <property type="resolution" value="6.46 A"/>
    <property type="chains" value="H=2-178"/>
</dbReference>
<dbReference type="PDBsum" id="1ML5"/>
<dbReference type="PDBsum" id="1RL6"/>
<dbReference type="PDBsum" id="4V4T"/>
<dbReference type="SMR" id="P02391"/>
<dbReference type="IntAct" id="P02391">
    <property type="interactions" value="1"/>
</dbReference>
<dbReference type="GeneID" id="89612885"/>
<dbReference type="OrthoDB" id="9805007at2"/>
<dbReference type="EvolutionaryTrace" id="P02391"/>
<dbReference type="GO" id="GO:0022625">
    <property type="term" value="C:cytosolic large ribosomal subunit"/>
    <property type="evidence" value="ECO:0007669"/>
    <property type="project" value="TreeGrafter"/>
</dbReference>
<dbReference type="GO" id="GO:0019843">
    <property type="term" value="F:rRNA binding"/>
    <property type="evidence" value="ECO:0007669"/>
    <property type="project" value="UniProtKB-UniRule"/>
</dbReference>
<dbReference type="GO" id="GO:0003735">
    <property type="term" value="F:structural constituent of ribosome"/>
    <property type="evidence" value="ECO:0007669"/>
    <property type="project" value="InterPro"/>
</dbReference>
<dbReference type="GO" id="GO:0002181">
    <property type="term" value="P:cytoplasmic translation"/>
    <property type="evidence" value="ECO:0007669"/>
    <property type="project" value="TreeGrafter"/>
</dbReference>
<dbReference type="FunFam" id="3.90.930.12:FF:000001">
    <property type="entry name" value="50S ribosomal protein L6"/>
    <property type="match status" value="1"/>
</dbReference>
<dbReference type="FunFam" id="3.90.930.12:FF:000002">
    <property type="entry name" value="50S ribosomal protein L6"/>
    <property type="match status" value="1"/>
</dbReference>
<dbReference type="Gene3D" id="3.90.930.12">
    <property type="entry name" value="Ribosomal protein L6, alpha-beta domain"/>
    <property type="match status" value="2"/>
</dbReference>
<dbReference type="HAMAP" id="MF_01365_B">
    <property type="entry name" value="Ribosomal_uL6_B"/>
    <property type="match status" value="1"/>
</dbReference>
<dbReference type="InterPro" id="IPR000702">
    <property type="entry name" value="Ribosomal_uL6-like"/>
</dbReference>
<dbReference type="InterPro" id="IPR036789">
    <property type="entry name" value="Ribosomal_uL6-like_a/b-dom_sf"/>
</dbReference>
<dbReference type="InterPro" id="IPR020040">
    <property type="entry name" value="Ribosomal_uL6_a/b-dom"/>
</dbReference>
<dbReference type="InterPro" id="IPR019906">
    <property type="entry name" value="Ribosomal_uL6_bac-type"/>
</dbReference>
<dbReference type="InterPro" id="IPR002358">
    <property type="entry name" value="Ribosomal_uL6_CS"/>
</dbReference>
<dbReference type="NCBIfam" id="TIGR03654">
    <property type="entry name" value="L6_bact"/>
    <property type="match status" value="1"/>
</dbReference>
<dbReference type="PANTHER" id="PTHR11655">
    <property type="entry name" value="60S/50S RIBOSOMAL PROTEIN L6/L9"/>
    <property type="match status" value="1"/>
</dbReference>
<dbReference type="PANTHER" id="PTHR11655:SF14">
    <property type="entry name" value="LARGE RIBOSOMAL SUBUNIT PROTEIN UL6M"/>
    <property type="match status" value="1"/>
</dbReference>
<dbReference type="Pfam" id="PF00347">
    <property type="entry name" value="Ribosomal_L6"/>
    <property type="match status" value="2"/>
</dbReference>
<dbReference type="PIRSF" id="PIRSF002162">
    <property type="entry name" value="Ribosomal_L6"/>
    <property type="match status" value="1"/>
</dbReference>
<dbReference type="PRINTS" id="PR00059">
    <property type="entry name" value="RIBOSOMALL6"/>
</dbReference>
<dbReference type="SUPFAM" id="SSF56053">
    <property type="entry name" value="Ribosomal protein L6"/>
    <property type="match status" value="2"/>
</dbReference>
<dbReference type="PROSITE" id="PS00525">
    <property type="entry name" value="RIBOSOMAL_L6_1"/>
    <property type="match status" value="1"/>
</dbReference>
<name>RL6_GEOSE</name>
<proteinExistence type="evidence at protein level"/>
<comment type="function">
    <text evidence="1">It is located near the subunit interface in the base of the L7/L12 stalk, and near the tRNA binding site of the peptidyltransferase center (By similarity). This protein binds to the 23S rRNA, and is important in its secondary structure.</text>
</comment>
<comment type="subunit">
    <text>Part of the 50S ribosomal subunit.</text>
</comment>
<comment type="similarity">
    <text evidence="2">Belongs to the universal ribosomal protein uL6 family.</text>
</comment>
<accession>P02391</accession>
<feature type="initiator methionine" description="Removed" evidence="3">
    <location>
        <position position="1"/>
    </location>
</feature>
<feature type="chain" id="PRO_0000131037" description="Large ribosomal subunit protein uL6">
    <location>
        <begin position="2"/>
        <end position="178"/>
    </location>
</feature>
<feature type="strand" evidence="5">
    <location>
        <begin position="16"/>
        <end position="20"/>
    </location>
</feature>
<feature type="strand" evidence="5">
    <location>
        <begin position="23"/>
        <end position="28"/>
    </location>
</feature>
<feature type="strand" evidence="5">
    <location>
        <begin position="31"/>
        <end position="36"/>
    </location>
</feature>
<feature type="strand" evidence="5">
    <location>
        <begin position="42"/>
        <end position="46"/>
    </location>
</feature>
<feature type="strand" evidence="5">
    <location>
        <begin position="49"/>
        <end position="53"/>
    </location>
</feature>
<feature type="helix" evidence="5">
    <location>
        <begin position="59"/>
        <end position="80"/>
    </location>
</feature>
<feature type="strand" evidence="5">
    <location>
        <begin position="83"/>
        <end position="91"/>
    </location>
</feature>
<feature type="strand" evidence="5">
    <location>
        <begin position="95"/>
        <end position="99"/>
    </location>
</feature>
<feature type="strand" evidence="5">
    <location>
        <begin position="102"/>
        <end position="111"/>
    </location>
</feature>
<feature type="strand" evidence="5">
    <location>
        <begin position="113"/>
        <end position="115"/>
    </location>
</feature>
<feature type="strand" evidence="5">
    <location>
        <begin position="121"/>
        <end position="127"/>
    </location>
</feature>
<feature type="strand" evidence="5">
    <location>
        <begin position="130"/>
        <end position="136"/>
    </location>
</feature>
<feature type="helix" evidence="5">
    <location>
        <begin position="138"/>
        <end position="149"/>
    </location>
</feature>
<feature type="turn" evidence="5">
    <location>
        <begin position="156"/>
        <end position="158"/>
    </location>
</feature>
<feature type="strand" evidence="5">
    <location>
        <begin position="161"/>
        <end position="164"/>
    </location>
</feature>